<protein>
    <recommendedName>
        <fullName evidence="1">Large ribosomal subunit protein bL9</fullName>
    </recommendedName>
    <alternativeName>
        <fullName evidence="2">50S ribosomal protein L9</fullName>
    </alternativeName>
</protein>
<dbReference type="EMBL" id="CP000108">
    <property type="protein sequence ID" value="ABB27375.1"/>
    <property type="molecule type" value="Genomic_DNA"/>
</dbReference>
<dbReference type="SMR" id="Q3ANR2"/>
<dbReference type="STRING" id="340177.Cag_0097"/>
<dbReference type="KEGG" id="cch:Cag_0097"/>
<dbReference type="eggNOG" id="COG0359">
    <property type="taxonomic scope" value="Bacteria"/>
</dbReference>
<dbReference type="HOGENOM" id="CLU_078938_3_0_10"/>
<dbReference type="OrthoDB" id="9788336at2"/>
<dbReference type="GO" id="GO:1990904">
    <property type="term" value="C:ribonucleoprotein complex"/>
    <property type="evidence" value="ECO:0007669"/>
    <property type="project" value="UniProtKB-KW"/>
</dbReference>
<dbReference type="GO" id="GO:0005840">
    <property type="term" value="C:ribosome"/>
    <property type="evidence" value="ECO:0007669"/>
    <property type="project" value="UniProtKB-KW"/>
</dbReference>
<dbReference type="GO" id="GO:0019843">
    <property type="term" value="F:rRNA binding"/>
    <property type="evidence" value="ECO:0007669"/>
    <property type="project" value="UniProtKB-UniRule"/>
</dbReference>
<dbReference type="GO" id="GO:0003735">
    <property type="term" value="F:structural constituent of ribosome"/>
    <property type="evidence" value="ECO:0007669"/>
    <property type="project" value="InterPro"/>
</dbReference>
<dbReference type="GO" id="GO:0006412">
    <property type="term" value="P:translation"/>
    <property type="evidence" value="ECO:0007669"/>
    <property type="project" value="UniProtKB-UniRule"/>
</dbReference>
<dbReference type="FunFam" id="3.10.430.100:FF:000006">
    <property type="entry name" value="50S ribosomal protein L9"/>
    <property type="match status" value="1"/>
</dbReference>
<dbReference type="FunFam" id="3.40.5.10:FF:000003">
    <property type="entry name" value="50S ribosomal protein L9"/>
    <property type="match status" value="1"/>
</dbReference>
<dbReference type="Gene3D" id="3.10.430.100">
    <property type="entry name" value="Ribosomal protein L9, C-terminal domain"/>
    <property type="match status" value="1"/>
</dbReference>
<dbReference type="Gene3D" id="3.40.5.10">
    <property type="entry name" value="Ribosomal protein L9, N-terminal domain"/>
    <property type="match status" value="1"/>
</dbReference>
<dbReference type="HAMAP" id="MF_00503">
    <property type="entry name" value="Ribosomal_bL9"/>
    <property type="match status" value="1"/>
</dbReference>
<dbReference type="InterPro" id="IPR000244">
    <property type="entry name" value="Ribosomal_bL9"/>
</dbReference>
<dbReference type="InterPro" id="IPR009027">
    <property type="entry name" value="Ribosomal_bL9/RNase_H1_N"/>
</dbReference>
<dbReference type="InterPro" id="IPR020594">
    <property type="entry name" value="Ribosomal_bL9_bac/chp"/>
</dbReference>
<dbReference type="InterPro" id="IPR020069">
    <property type="entry name" value="Ribosomal_bL9_C"/>
</dbReference>
<dbReference type="InterPro" id="IPR036791">
    <property type="entry name" value="Ribosomal_bL9_C_sf"/>
</dbReference>
<dbReference type="InterPro" id="IPR020070">
    <property type="entry name" value="Ribosomal_bL9_N"/>
</dbReference>
<dbReference type="InterPro" id="IPR036935">
    <property type="entry name" value="Ribosomal_bL9_N_sf"/>
</dbReference>
<dbReference type="NCBIfam" id="TIGR00158">
    <property type="entry name" value="L9"/>
    <property type="match status" value="1"/>
</dbReference>
<dbReference type="PANTHER" id="PTHR21368">
    <property type="entry name" value="50S RIBOSOMAL PROTEIN L9"/>
    <property type="match status" value="1"/>
</dbReference>
<dbReference type="Pfam" id="PF03948">
    <property type="entry name" value="Ribosomal_L9_C"/>
    <property type="match status" value="1"/>
</dbReference>
<dbReference type="Pfam" id="PF01281">
    <property type="entry name" value="Ribosomal_L9_N"/>
    <property type="match status" value="1"/>
</dbReference>
<dbReference type="SUPFAM" id="SSF55658">
    <property type="entry name" value="L9 N-domain-like"/>
    <property type="match status" value="1"/>
</dbReference>
<dbReference type="SUPFAM" id="SSF55653">
    <property type="entry name" value="Ribosomal protein L9 C-domain"/>
    <property type="match status" value="1"/>
</dbReference>
<dbReference type="PROSITE" id="PS00651">
    <property type="entry name" value="RIBOSOMAL_L9"/>
    <property type="match status" value="1"/>
</dbReference>
<comment type="function">
    <text evidence="1">Binds to the 23S rRNA.</text>
</comment>
<comment type="similarity">
    <text evidence="1">Belongs to the bacterial ribosomal protein bL9 family.</text>
</comment>
<accession>Q3ANR2</accession>
<proteinExistence type="inferred from homology"/>
<evidence type="ECO:0000255" key="1">
    <source>
        <dbReference type="HAMAP-Rule" id="MF_00503"/>
    </source>
</evidence>
<evidence type="ECO:0000305" key="2"/>
<gene>
    <name evidence="1" type="primary">rplI</name>
    <name type="ordered locus">Cag_0097</name>
</gene>
<name>RL9_CHLCH</name>
<sequence length="151" mass="16544">MKVILRKDVATLGDAGDVVIVKNGYANNYLIPQSIAIRATEGTLKALETERKQQARKVEMQRKHAREQAQKIEQLALKVFARAGESGKLFGTVTSADIAEALKAQGFEIDRRKITIEAPIKALGKFEAAVKLFSDVTVAVQFEVEAEGMEA</sequence>
<feature type="chain" id="PRO_0000236506" description="Large ribosomal subunit protein bL9">
    <location>
        <begin position="1"/>
        <end position="151"/>
    </location>
</feature>
<reference key="1">
    <citation type="submission" date="2005-08" db="EMBL/GenBank/DDBJ databases">
        <title>Complete sequence of Chlorobium chlorochromatii CaD3.</title>
        <authorList>
            <consortium name="US DOE Joint Genome Institute"/>
            <person name="Copeland A."/>
            <person name="Lucas S."/>
            <person name="Lapidus A."/>
            <person name="Barry K."/>
            <person name="Detter J.C."/>
            <person name="Glavina T."/>
            <person name="Hammon N."/>
            <person name="Israni S."/>
            <person name="Pitluck S."/>
            <person name="Bryant D."/>
            <person name="Schmutz J."/>
            <person name="Larimer F."/>
            <person name="Land M."/>
            <person name="Kyrpides N."/>
            <person name="Ivanova N."/>
            <person name="Richardson P."/>
        </authorList>
    </citation>
    <scope>NUCLEOTIDE SEQUENCE [LARGE SCALE GENOMIC DNA]</scope>
    <source>
        <strain>CaD3</strain>
    </source>
</reference>
<keyword id="KW-0687">Ribonucleoprotein</keyword>
<keyword id="KW-0689">Ribosomal protein</keyword>
<keyword id="KW-0694">RNA-binding</keyword>
<keyword id="KW-0699">rRNA-binding</keyword>
<organism>
    <name type="scientific">Chlorobium chlorochromatii (strain CaD3)</name>
    <dbReference type="NCBI Taxonomy" id="340177"/>
    <lineage>
        <taxon>Bacteria</taxon>
        <taxon>Pseudomonadati</taxon>
        <taxon>Chlorobiota</taxon>
        <taxon>Chlorobiia</taxon>
        <taxon>Chlorobiales</taxon>
        <taxon>Chlorobiaceae</taxon>
        <taxon>Chlorobium/Pelodictyon group</taxon>
        <taxon>Chlorobium</taxon>
    </lineage>
</organism>